<accession>Q81WY7</accession>
<accession>Q6HQS3</accession>
<accession>Q6KK41</accession>
<protein>
    <recommendedName>
        <fullName evidence="1">Phosphomethylpyrimidine synthase</fullName>
        <ecNumber evidence="1">4.1.99.17</ecNumber>
    </recommendedName>
    <alternativeName>
        <fullName evidence="1">Hydroxymethylpyrimidine phosphate synthase</fullName>
        <shortName evidence="1">HMP-P synthase</shortName>
        <shortName evidence="1">HMP-phosphate synthase</shortName>
        <shortName evidence="1">HMPP synthase</shortName>
    </alternativeName>
    <alternativeName>
        <fullName evidence="1">Thiamine biosynthesis protein ThiC</fullName>
    </alternativeName>
</protein>
<reference key="1">
    <citation type="journal article" date="2003" name="Nature">
        <title>The genome sequence of Bacillus anthracis Ames and comparison to closely related bacteria.</title>
        <authorList>
            <person name="Read T.D."/>
            <person name="Peterson S.N."/>
            <person name="Tourasse N.J."/>
            <person name="Baillie L.W."/>
            <person name="Paulsen I.T."/>
            <person name="Nelson K.E."/>
            <person name="Tettelin H."/>
            <person name="Fouts D.E."/>
            <person name="Eisen J.A."/>
            <person name="Gill S.R."/>
            <person name="Holtzapple E.K."/>
            <person name="Okstad O.A."/>
            <person name="Helgason E."/>
            <person name="Rilstone J."/>
            <person name="Wu M."/>
            <person name="Kolonay J.F."/>
            <person name="Beanan M.J."/>
            <person name="Dodson R.J."/>
            <person name="Brinkac L.M."/>
            <person name="Gwinn M.L."/>
            <person name="DeBoy R.T."/>
            <person name="Madpu R."/>
            <person name="Daugherty S.C."/>
            <person name="Durkin A.S."/>
            <person name="Haft D.H."/>
            <person name="Nelson W.C."/>
            <person name="Peterson J.D."/>
            <person name="Pop M."/>
            <person name="Khouri H.M."/>
            <person name="Radune D."/>
            <person name="Benton J.L."/>
            <person name="Mahamoud Y."/>
            <person name="Jiang L."/>
            <person name="Hance I.R."/>
            <person name="Weidman J.F."/>
            <person name="Berry K.J."/>
            <person name="Plaut R.D."/>
            <person name="Wolf A.M."/>
            <person name="Watkins K.L."/>
            <person name="Nierman W.C."/>
            <person name="Hazen A."/>
            <person name="Cline R.T."/>
            <person name="Redmond C."/>
            <person name="Thwaite J.E."/>
            <person name="White O."/>
            <person name="Salzberg S.L."/>
            <person name="Thomason B."/>
            <person name="Friedlander A.M."/>
            <person name="Koehler T.M."/>
            <person name="Hanna P.C."/>
            <person name="Kolstoe A.-B."/>
            <person name="Fraser C.M."/>
        </authorList>
    </citation>
    <scope>NUCLEOTIDE SEQUENCE [LARGE SCALE GENOMIC DNA]</scope>
    <source>
        <strain>Ames / isolate Porton</strain>
    </source>
</reference>
<reference key="2">
    <citation type="journal article" date="2009" name="J. Bacteriol.">
        <title>The complete genome sequence of Bacillus anthracis Ames 'Ancestor'.</title>
        <authorList>
            <person name="Ravel J."/>
            <person name="Jiang L."/>
            <person name="Stanley S.T."/>
            <person name="Wilson M.R."/>
            <person name="Decker R.S."/>
            <person name="Read T.D."/>
            <person name="Worsham P."/>
            <person name="Keim P.S."/>
            <person name="Salzberg S.L."/>
            <person name="Fraser-Liggett C.M."/>
            <person name="Rasko D.A."/>
        </authorList>
    </citation>
    <scope>NUCLEOTIDE SEQUENCE [LARGE SCALE GENOMIC DNA]</scope>
    <source>
        <strain>Ames ancestor</strain>
    </source>
</reference>
<reference key="3">
    <citation type="submission" date="2004-01" db="EMBL/GenBank/DDBJ databases">
        <title>Complete genome sequence of Bacillus anthracis Sterne.</title>
        <authorList>
            <person name="Brettin T.S."/>
            <person name="Bruce D."/>
            <person name="Challacombe J.F."/>
            <person name="Gilna P."/>
            <person name="Han C."/>
            <person name="Hill K."/>
            <person name="Hitchcock P."/>
            <person name="Jackson P."/>
            <person name="Keim P."/>
            <person name="Longmire J."/>
            <person name="Lucas S."/>
            <person name="Okinaka R."/>
            <person name="Richardson P."/>
            <person name="Rubin E."/>
            <person name="Tice H."/>
        </authorList>
    </citation>
    <scope>NUCLEOTIDE SEQUENCE [LARGE SCALE GENOMIC DNA]</scope>
    <source>
        <strain>Sterne</strain>
    </source>
</reference>
<gene>
    <name evidence="1" type="primary">thiC</name>
    <name type="ordered locus">BA_5463</name>
    <name type="ordered locus">GBAA_5463</name>
    <name type="ordered locus">BAS5076</name>
</gene>
<comment type="function">
    <text evidence="1">Catalyzes the synthesis of the hydroxymethylpyrimidine phosphate (HMP-P) moiety of thiamine from aminoimidazole ribotide (AIR) in a radical S-adenosyl-L-methionine (SAM)-dependent reaction.</text>
</comment>
<comment type="catalytic activity">
    <reaction evidence="1">
        <text>5-amino-1-(5-phospho-beta-D-ribosyl)imidazole + S-adenosyl-L-methionine = 4-amino-2-methyl-5-(phosphooxymethyl)pyrimidine + CO + 5'-deoxyadenosine + formate + L-methionine + 3 H(+)</text>
        <dbReference type="Rhea" id="RHEA:24840"/>
        <dbReference type="ChEBI" id="CHEBI:15378"/>
        <dbReference type="ChEBI" id="CHEBI:15740"/>
        <dbReference type="ChEBI" id="CHEBI:17245"/>
        <dbReference type="ChEBI" id="CHEBI:17319"/>
        <dbReference type="ChEBI" id="CHEBI:57844"/>
        <dbReference type="ChEBI" id="CHEBI:58354"/>
        <dbReference type="ChEBI" id="CHEBI:59789"/>
        <dbReference type="ChEBI" id="CHEBI:137981"/>
        <dbReference type="EC" id="4.1.99.17"/>
    </reaction>
</comment>
<comment type="cofactor">
    <cofactor evidence="1">
        <name>[4Fe-4S] cluster</name>
        <dbReference type="ChEBI" id="CHEBI:49883"/>
    </cofactor>
    <text evidence="1">Binds 1 [4Fe-4S] cluster per subunit. The cluster is coordinated with 3 cysteines and an exchangeable S-adenosyl-L-methionine.</text>
</comment>
<comment type="pathway">
    <text evidence="1">Cofactor biosynthesis; thiamine diphosphate biosynthesis.</text>
</comment>
<comment type="similarity">
    <text evidence="1">Belongs to the ThiC family.</text>
</comment>
<keyword id="KW-0004">4Fe-4S</keyword>
<keyword id="KW-0408">Iron</keyword>
<keyword id="KW-0411">Iron-sulfur</keyword>
<keyword id="KW-0456">Lyase</keyword>
<keyword id="KW-0479">Metal-binding</keyword>
<keyword id="KW-1185">Reference proteome</keyword>
<keyword id="KW-0949">S-adenosyl-L-methionine</keyword>
<keyword id="KW-0784">Thiamine biosynthesis</keyword>
<keyword id="KW-0862">Zinc</keyword>
<dbReference type="EC" id="4.1.99.17" evidence="1"/>
<dbReference type="EMBL" id="AE016879">
    <property type="protein sequence ID" value="AAP29117.1"/>
    <property type="molecule type" value="Genomic_DNA"/>
</dbReference>
<dbReference type="EMBL" id="AE017334">
    <property type="protein sequence ID" value="AAT34601.1"/>
    <property type="molecule type" value="Genomic_DNA"/>
</dbReference>
<dbReference type="EMBL" id="AE017225">
    <property type="protein sequence ID" value="AAT57365.1"/>
    <property type="molecule type" value="Genomic_DNA"/>
</dbReference>
<dbReference type="RefSeq" id="NP_847631.1">
    <property type="nucleotide sequence ID" value="NC_003997.3"/>
</dbReference>
<dbReference type="RefSeq" id="WP_000814464.1">
    <property type="nucleotide sequence ID" value="NZ_WXXJ01000017.1"/>
</dbReference>
<dbReference type="RefSeq" id="YP_031315.1">
    <property type="nucleotide sequence ID" value="NC_005945.1"/>
</dbReference>
<dbReference type="SMR" id="Q81WY7"/>
<dbReference type="IntAct" id="Q81WY7">
    <property type="interactions" value="1"/>
</dbReference>
<dbReference type="STRING" id="261594.GBAA_5463"/>
<dbReference type="DNASU" id="1085086"/>
<dbReference type="GeneID" id="45025059"/>
<dbReference type="KEGG" id="ban:BA_5463"/>
<dbReference type="KEGG" id="banh:HYU01_26680"/>
<dbReference type="KEGG" id="bar:GBAA_5463"/>
<dbReference type="KEGG" id="bat:BAS5076"/>
<dbReference type="PATRIC" id="fig|198094.11.peg.5423"/>
<dbReference type="eggNOG" id="COG0422">
    <property type="taxonomic scope" value="Bacteria"/>
</dbReference>
<dbReference type="HOGENOM" id="CLU_013181_2_1_9"/>
<dbReference type="OMA" id="FDWNKQF"/>
<dbReference type="OrthoDB" id="9805897at2"/>
<dbReference type="UniPathway" id="UPA00060"/>
<dbReference type="Proteomes" id="UP000000427">
    <property type="component" value="Chromosome"/>
</dbReference>
<dbReference type="Proteomes" id="UP000000594">
    <property type="component" value="Chromosome"/>
</dbReference>
<dbReference type="GO" id="GO:0005829">
    <property type="term" value="C:cytosol"/>
    <property type="evidence" value="ECO:0007669"/>
    <property type="project" value="TreeGrafter"/>
</dbReference>
<dbReference type="GO" id="GO:0051539">
    <property type="term" value="F:4 iron, 4 sulfur cluster binding"/>
    <property type="evidence" value="ECO:0007669"/>
    <property type="project" value="UniProtKB-KW"/>
</dbReference>
<dbReference type="GO" id="GO:0016830">
    <property type="term" value="F:carbon-carbon lyase activity"/>
    <property type="evidence" value="ECO:0007669"/>
    <property type="project" value="InterPro"/>
</dbReference>
<dbReference type="GO" id="GO:0008270">
    <property type="term" value="F:zinc ion binding"/>
    <property type="evidence" value="ECO:0007669"/>
    <property type="project" value="UniProtKB-UniRule"/>
</dbReference>
<dbReference type="GO" id="GO:0009228">
    <property type="term" value="P:thiamine biosynthetic process"/>
    <property type="evidence" value="ECO:0007669"/>
    <property type="project" value="UniProtKB-KW"/>
</dbReference>
<dbReference type="GO" id="GO:0009229">
    <property type="term" value="P:thiamine diphosphate biosynthetic process"/>
    <property type="evidence" value="ECO:0007669"/>
    <property type="project" value="UniProtKB-UniRule"/>
</dbReference>
<dbReference type="FunFam" id="3.20.20.540:FF:000001">
    <property type="entry name" value="Phosphomethylpyrimidine synthase"/>
    <property type="match status" value="1"/>
</dbReference>
<dbReference type="Gene3D" id="6.10.250.620">
    <property type="match status" value="1"/>
</dbReference>
<dbReference type="Gene3D" id="3.20.20.540">
    <property type="entry name" value="Radical SAM ThiC family, central domain"/>
    <property type="match status" value="1"/>
</dbReference>
<dbReference type="HAMAP" id="MF_00089">
    <property type="entry name" value="ThiC"/>
    <property type="match status" value="1"/>
</dbReference>
<dbReference type="InterPro" id="IPR037509">
    <property type="entry name" value="ThiC"/>
</dbReference>
<dbReference type="InterPro" id="IPR025747">
    <property type="entry name" value="ThiC-associated_dom"/>
</dbReference>
<dbReference type="InterPro" id="IPR038521">
    <property type="entry name" value="ThiC/Bza_core_dom"/>
</dbReference>
<dbReference type="InterPro" id="IPR002817">
    <property type="entry name" value="ThiC/BzaA/B"/>
</dbReference>
<dbReference type="NCBIfam" id="NF006763">
    <property type="entry name" value="PRK09284.1"/>
    <property type="match status" value="1"/>
</dbReference>
<dbReference type="NCBIfam" id="NF009895">
    <property type="entry name" value="PRK13352.1"/>
    <property type="match status" value="1"/>
</dbReference>
<dbReference type="NCBIfam" id="TIGR00190">
    <property type="entry name" value="thiC"/>
    <property type="match status" value="1"/>
</dbReference>
<dbReference type="PANTHER" id="PTHR30557:SF1">
    <property type="entry name" value="PHOSPHOMETHYLPYRIMIDINE SYNTHASE, CHLOROPLASTIC"/>
    <property type="match status" value="1"/>
</dbReference>
<dbReference type="PANTHER" id="PTHR30557">
    <property type="entry name" value="THIAMINE BIOSYNTHESIS PROTEIN THIC"/>
    <property type="match status" value="1"/>
</dbReference>
<dbReference type="Pfam" id="PF13667">
    <property type="entry name" value="ThiC-associated"/>
    <property type="match status" value="1"/>
</dbReference>
<dbReference type="Pfam" id="PF01964">
    <property type="entry name" value="ThiC_Rad_SAM"/>
    <property type="match status" value="1"/>
</dbReference>
<dbReference type="SFLD" id="SFLDF00407">
    <property type="entry name" value="phosphomethylpyrimidine_syntha"/>
    <property type="match status" value="1"/>
</dbReference>
<dbReference type="SFLD" id="SFLDG01114">
    <property type="entry name" value="phosphomethylpyrimidine_syntha"/>
    <property type="match status" value="1"/>
</dbReference>
<dbReference type="SFLD" id="SFLDS00113">
    <property type="entry name" value="Radical_SAM_Phosphomethylpyrim"/>
    <property type="match status" value="1"/>
</dbReference>
<proteinExistence type="inferred from homology"/>
<organism>
    <name type="scientific">Bacillus anthracis</name>
    <dbReference type="NCBI Taxonomy" id="1392"/>
    <lineage>
        <taxon>Bacteria</taxon>
        <taxon>Bacillati</taxon>
        <taxon>Bacillota</taxon>
        <taxon>Bacilli</taxon>
        <taxon>Bacillales</taxon>
        <taxon>Bacillaceae</taxon>
        <taxon>Bacillus</taxon>
        <taxon>Bacillus cereus group</taxon>
    </lineage>
</organism>
<name>THIC_BACAN</name>
<sequence>MKQSVSAEQIELKSSLPGSKKVYVDGPREGMKVPMREIEQSDTNGVPNPPIRVYDTSGPYTDPAYKVELEKGIPTPRHSWILERGDVEAYEGREVKPEDDGVKVASKHTPVFPQMDRKPLRAKQGANVTQMHYARNGIIKSEMEYVAIREGVDPEFVRKEIAEGRAILPANINHPEAEPMIIGRNFHVKVNANIGNSAVSSSIAEEVEKMTWATRWGADTIMDLSTGKNIHTTREWIIRNAPVPVGTVPIYQALEKVNGIAEDLTWEVYRDTLIEQAEQGVDYFTIHAGVLLRYIPITAKRTTGIVSRGGSIMAQWCLFHHKENFLYTHFEEICEIMKQYDVSFSLGDGLRPGSIADANDEAQFSELETLGELTKIAWKHDVQVMIEGPGHVPMHLIKENMEKELDICQGAPFYTLGPLTTDIAPGYDHITSAIGAAMIGWFGTAMLCYVTPKEHLGLPNKDDVREGVITYKIAAHAADLAKGHKTAHQRDDALSKARFEFRWRDQFNLSLDPERAMEYHDETLPAEGAKTAHFCSMCGPKFCSMRISHDIREYAKENDLETTEAIEKGMKEKAKEFKETGSHLYQ</sequence>
<feature type="chain" id="PRO_0000152781" description="Phosphomethylpyrimidine synthase">
    <location>
        <begin position="1"/>
        <end position="586"/>
    </location>
</feature>
<feature type="region of interest" description="Disordered" evidence="2">
    <location>
        <begin position="1"/>
        <end position="58"/>
    </location>
</feature>
<feature type="compositionally biased region" description="Basic and acidic residues" evidence="2">
    <location>
        <begin position="22"/>
        <end position="39"/>
    </location>
</feature>
<feature type="binding site" evidence="1">
    <location>
        <position position="193"/>
    </location>
    <ligand>
        <name>substrate</name>
    </ligand>
</feature>
<feature type="binding site" evidence="1">
    <location>
        <position position="222"/>
    </location>
    <ligand>
        <name>substrate</name>
    </ligand>
</feature>
<feature type="binding site" evidence="1">
    <location>
        <position position="251"/>
    </location>
    <ligand>
        <name>substrate</name>
    </ligand>
</feature>
<feature type="binding site" evidence="1">
    <location>
        <position position="287"/>
    </location>
    <ligand>
        <name>substrate</name>
    </ligand>
</feature>
<feature type="binding site" evidence="1">
    <location>
        <begin position="307"/>
        <end position="309"/>
    </location>
    <ligand>
        <name>substrate</name>
    </ligand>
</feature>
<feature type="binding site" evidence="1">
    <location>
        <begin position="348"/>
        <end position="351"/>
    </location>
    <ligand>
        <name>substrate</name>
    </ligand>
</feature>
<feature type="binding site" evidence="1">
    <location>
        <position position="387"/>
    </location>
    <ligand>
        <name>substrate</name>
    </ligand>
</feature>
<feature type="binding site" evidence="1">
    <location>
        <position position="391"/>
    </location>
    <ligand>
        <name>Zn(2+)</name>
        <dbReference type="ChEBI" id="CHEBI:29105"/>
    </ligand>
</feature>
<feature type="binding site" evidence="1">
    <location>
        <position position="414"/>
    </location>
    <ligand>
        <name>substrate</name>
    </ligand>
</feature>
<feature type="binding site" evidence="1">
    <location>
        <position position="455"/>
    </location>
    <ligand>
        <name>Zn(2+)</name>
        <dbReference type="ChEBI" id="CHEBI:29105"/>
    </ligand>
</feature>
<feature type="binding site" evidence="1">
    <location>
        <position position="535"/>
    </location>
    <ligand>
        <name>[4Fe-4S] cluster</name>
        <dbReference type="ChEBI" id="CHEBI:49883"/>
        <note>4Fe-4S-S-AdoMet</note>
    </ligand>
</feature>
<feature type="binding site" evidence="1">
    <location>
        <position position="538"/>
    </location>
    <ligand>
        <name>[4Fe-4S] cluster</name>
        <dbReference type="ChEBI" id="CHEBI:49883"/>
        <note>4Fe-4S-S-AdoMet</note>
    </ligand>
</feature>
<feature type="binding site" evidence="1">
    <location>
        <position position="543"/>
    </location>
    <ligand>
        <name>[4Fe-4S] cluster</name>
        <dbReference type="ChEBI" id="CHEBI:49883"/>
        <note>4Fe-4S-S-AdoMet</note>
    </ligand>
</feature>
<evidence type="ECO:0000255" key="1">
    <source>
        <dbReference type="HAMAP-Rule" id="MF_00089"/>
    </source>
</evidence>
<evidence type="ECO:0000256" key="2">
    <source>
        <dbReference type="SAM" id="MobiDB-lite"/>
    </source>
</evidence>